<protein>
    <recommendedName>
        <fullName evidence="1">Small ribosomal subunit protein uS13</fullName>
    </recommendedName>
    <alternativeName>
        <fullName evidence="3">30S ribosomal protein S13</fullName>
    </alternativeName>
</protein>
<dbReference type="EMBL" id="CP000247">
    <property type="protein sequence ID" value="ABG71366.1"/>
    <property type="molecule type" value="Genomic_DNA"/>
</dbReference>
<dbReference type="RefSeq" id="WP_000090775.1">
    <property type="nucleotide sequence ID" value="NC_008253.1"/>
</dbReference>
<dbReference type="SMR" id="Q0TCG3"/>
<dbReference type="GeneID" id="93778689"/>
<dbReference type="KEGG" id="ecp:ECP_3386"/>
<dbReference type="HOGENOM" id="CLU_103849_1_2_6"/>
<dbReference type="Proteomes" id="UP000009182">
    <property type="component" value="Chromosome"/>
</dbReference>
<dbReference type="GO" id="GO:0005829">
    <property type="term" value="C:cytosol"/>
    <property type="evidence" value="ECO:0007669"/>
    <property type="project" value="TreeGrafter"/>
</dbReference>
<dbReference type="GO" id="GO:0015935">
    <property type="term" value="C:small ribosomal subunit"/>
    <property type="evidence" value="ECO:0007669"/>
    <property type="project" value="TreeGrafter"/>
</dbReference>
<dbReference type="GO" id="GO:0019843">
    <property type="term" value="F:rRNA binding"/>
    <property type="evidence" value="ECO:0007669"/>
    <property type="project" value="UniProtKB-UniRule"/>
</dbReference>
<dbReference type="GO" id="GO:0003735">
    <property type="term" value="F:structural constituent of ribosome"/>
    <property type="evidence" value="ECO:0007669"/>
    <property type="project" value="InterPro"/>
</dbReference>
<dbReference type="GO" id="GO:0000049">
    <property type="term" value="F:tRNA binding"/>
    <property type="evidence" value="ECO:0007669"/>
    <property type="project" value="UniProtKB-UniRule"/>
</dbReference>
<dbReference type="GO" id="GO:0006412">
    <property type="term" value="P:translation"/>
    <property type="evidence" value="ECO:0007669"/>
    <property type="project" value="UniProtKB-UniRule"/>
</dbReference>
<dbReference type="FunFam" id="1.10.8.50:FF:000001">
    <property type="entry name" value="30S ribosomal protein S13"/>
    <property type="match status" value="1"/>
</dbReference>
<dbReference type="FunFam" id="4.10.910.10:FF:000001">
    <property type="entry name" value="30S ribosomal protein S13"/>
    <property type="match status" value="1"/>
</dbReference>
<dbReference type="Gene3D" id="1.10.8.50">
    <property type="match status" value="1"/>
</dbReference>
<dbReference type="Gene3D" id="4.10.910.10">
    <property type="entry name" value="30s ribosomal protein s13, domain 2"/>
    <property type="match status" value="1"/>
</dbReference>
<dbReference type="HAMAP" id="MF_01315">
    <property type="entry name" value="Ribosomal_uS13"/>
    <property type="match status" value="1"/>
</dbReference>
<dbReference type="InterPro" id="IPR027437">
    <property type="entry name" value="Rbsml_uS13_C"/>
</dbReference>
<dbReference type="InterPro" id="IPR001892">
    <property type="entry name" value="Ribosomal_uS13"/>
</dbReference>
<dbReference type="InterPro" id="IPR010979">
    <property type="entry name" value="Ribosomal_uS13-like_H2TH"/>
</dbReference>
<dbReference type="InterPro" id="IPR019980">
    <property type="entry name" value="Ribosomal_uS13_bac-type"/>
</dbReference>
<dbReference type="InterPro" id="IPR018269">
    <property type="entry name" value="Ribosomal_uS13_CS"/>
</dbReference>
<dbReference type="NCBIfam" id="TIGR03631">
    <property type="entry name" value="uS13_bact"/>
    <property type="match status" value="1"/>
</dbReference>
<dbReference type="PANTHER" id="PTHR10871">
    <property type="entry name" value="30S RIBOSOMAL PROTEIN S13/40S RIBOSOMAL PROTEIN S18"/>
    <property type="match status" value="1"/>
</dbReference>
<dbReference type="PANTHER" id="PTHR10871:SF1">
    <property type="entry name" value="SMALL RIBOSOMAL SUBUNIT PROTEIN US13M"/>
    <property type="match status" value="1"/>
</dbReference>
<dbReference type="Pfam" id="PF00416">
    <property type="entry name" value="Ribosomal_S13"/>
    <property type="match status" value="1"/>
</dbReference>
<dbReference type="PIRSF" id="PIRSF002134">
    <property type="entry name" value="Ribosomal_S13"/>
    <property type="match status" value="1"/>
</dbReference>
<dbReference type="SUPFAM" id="SSF46946">
    <property type="entry name" value="S13-like H2TH domain"/>
    <property type="match status" value="1"/>
</dbReference>
<dbReference type="PROSITE" id="PS00646">
    <property type="entry name" value="RIBOSOMAL_S13_1"/>
    <property type="match status" value="1"/>
</dbReference>
<dbReference type="PROSITE" id="PS50159">
    <property type="entry name" value="RIBOSOMAL_S13_2"/>
    <property type="match status" value="1"/>
</dbReference>
<reference key="1">
    <citation type="journal article" date="2006" name="Mol. Microbiol.">
        <title>Role of pathogenicity island-associated integrases in the genome plasticity of uropathogenic Escherichia coli strain 536.</title>
        <authorList>
            <person name="Hochhut B."/>
            <person name="Wilde C."/>
            <person name="Balling G."/>
            <person name="Middendorf B."/>
            <person name="Dobrindt U."/>
            <person name="Brzuszkiewicz E."/>
            <person name="Gottschalk G."/>
            <person name="Carniel E."/>
            <person name="Hacker J."/>
        </authorList>
    </citation>
    <scope>NUCLEOTIDE SEQUENCE [LARGE SCALE GENOMIC DNA]</scope>
    <source>
        <strain>536 / UPEC</strain>
    </source>
</reference>
<accession>Q0TCG3</accession>
<name>RS13_ECOL5</name>
<comment type="function">
    <text evidence="1">Located at the top of the head of the 30S subunit, it contacts several helices of the 16S rRNA. In the 70S ribosome it contacts the 23S rRNA (bridge B1a) and protein L5 of the 50S subunit (bridge B1b), connecting the 2 subunits; these bridges are implicated in subunit movement. Contacts the tRNAs in the A and P-sites.</text>
</comment>
<comment type="subunit">
    <text evidence="1">Part of the 30S ribosomal subunit. Forms a loose heterodimer with protein S19. Forms two bridges to the 50S subunit in the 70S ribosome.</text>
</comment>
<comment type="similarity">
    <text evidence="1">Belongs to the universal ribosomal protein uS13 family.</text>
</comment>
<feature type="chain" id="PRO_0000306602" description="Small ribosomal subunit protein uS13">
    <location>
        <begin position="1"/>
        <end position="118"/>
    </location>
</feature>
<feature type="region of interest" description="Disordered" evidence="2">
    <location>
        <begin position="94"/>
        <end position="118"/>
    </location>
</feature>
<proteinExistence type="inferred from homology"/>
<gene>
    <name evidence="1" type="primary">rpsM</name>
    <name type="ordered locus">ECP_3386</name>
</gene>
<organism>
    <name type="scientific">Escherichia coli O6:K15:H31 (strain 536 / UPEC)</name>
    <dbReference type="NCBI Taxonomy" id="362663"/>
    <lineage>
        <taxon>Bacteria</taxon>
        <taxon>Pseudomonadati</taxon>
        <taxon>Pseudomonadota</taxon>
        <taxon>Gammaproteobacteria</taxon>
        <taxon>Enterobacterales</taxon>
        <taxon>Enterobacteriaceae</taxon>
        <taxon>Escherichia</taxon>
    </lineage>
</organism>
<sequence>MARIAGINIPDHKHAVIALTSIYGVGKTRSKAILAAAGIAEDVKISELSEGQIDTLRDEVAKFVVEGDLRREISMSIKRLMDLGCYRGLRHRRGLPVRGQRTKTNARTRKGPRKPIKK</sequence>
<evidence type="ECO:0000255" key="1">
    <source>
        <dbReference type="HAMAP-Rule" id="MF_01315"/>
    </source>
</evidence>
<evidence type="ECO:0000256" key="2">
    <source>
        <dbReference type="SAM" id="MobiDB-lite"/>
    </source>
</evidence>
<evidence type="ECO:0000305" key="3"/>
<keyword id="KW-0687">Ribonucleoprotein</keyword>
<keyword id="KW-0689">Ribosomal protein</keyword>
<keyword id="KW-0694">RNA-binding</keyword>
<keyword id="KW-0699">rRNA-binding</keyword>
<keyword id="KW-0820">tRNA-binding</keyword>